<proteinExistence type="inferred from homology"/>
<sequence length="220" mass="23958">MATLLHIDSSVFPAEASASRSVTAAFRRTWEEQHPEGTVIYRDLAAVPVPHITADAWSAGYADPSERSTRQSAAFAARLELIEELERADVILIGAPMYNYTVPSTLKAWLDSVLLLGRTAGEAPSAQGTPTVVVASRGGSYAPGTPREDFEFVQNYLEAVLRSTLGLDLEFIVPELTMAPRNPAMSELLPLFESSRERAHSEAVTKAKELTERLTADNGR</sequence>
<protein>
    <recommendedName>
        <fullName evidence="1">FMN-dependent NADH:quinone oxidoreductase</fullName>
        <ecNumber evidence="1">1.6.5.-</ecNumber>
    </recommendedName>
    <alternativeName>
        <fullName evidence="1">Azo-dye reductase</fullName>
    </alternativeName>
    <alternativeName>
        <fullName evidence="1">FMN-dependent NADH-azo compound oxidoreductase</fullName>
    </alternativeName>
    <alternativeName>
        <fullName evidence="1">FMN-dependent NADH-azoreductase</fullName>
        <ecNumber evidence="1">1.7.1.17</ecNumber>
    </alternativeName>
</protein>
<reference key="1">
    <citation type="journal article" date="2002" name="Nature">
        <title>Complete genome sequence of the model actinomycete Streptomyces coelicolor A3(2).</title>
        <authorList>
            <person name="Bentley S.D."/>
            <person name="Chater K.F."/>
            <person name="Cerdeno-Tarraga A.-M."/>
            <person name="Challis G.L."/>
            <person name="Thomson N.R."/>
            <person name="James K.D."/>
            <person name="Harris D.E."/>
            <person name="Quail M.A."/>
            <person name="Kieser H."/>
            <person name="Harper D."/>
            <person name="Bateman A."/>
            <person name="Brown S."/>
            <person name="Chandra G."/>
            <person name="Chen C.W."/>
            <person name="Collins M."/>
            <person name="Cronin A."/>
            <person name="Fraser A."/>
            <person name="Goble A."/>
            <person name="Hidalgo J."/>
            <person name="Hornsby T."/>
            <person name="Howarth S."/>
            <person name="Huang C.-H."/>
            <person name="Kieser T."/>
            <person name="Larke L."/>
            <person name="Murphy L.D."/>
            <person name="Oliver K."/>
            <person name="O'Neil S."/>
            <person name="Rabbinowitsch E."/>
            <person name="Rajandream M.A."/>
            <person name="Rutherford K.M."/>
            <person name="Rutter S."/>
            <person name="Seeger K."/>
            <person name="Saunders D."/>
            <person name="Sharp S."/>
            <person name="Squares R."/>
            <person name="Squares S."/>
            <person name="Taylor K."/>
            <person name="Warren T."/>
            <person name="Wietzorrek A."/>
            <person name="Woodward J.R."/>
            <person name="Barrell B.G."/>
            <person name="Parkhill J."/>
            <person name="Hopwood D.A."/>
        </authorList>
    </citation>
    <scope>NUCLEOTIDE SEQUENCE [LARGE SCALE GENOMIC DNA]</scope>
    <source>
        <strain>ATCC BAA-471 / A3(2) / M145</strain>
    </source>
</reference>
<keyword id="KW-0285">Flavoprotein</keyword>
<keyword id="KW-0288">FMN</keyword>
<keyword id="KW-0520">NAD</keyword>
<keyword id="KW-0560">Oxidoreductase</keyword>
<keyword id="KW-1185">Reference proteome</keyword>
<feature type="chain" id="PRO_0000166360" description="FMN-dependent NADH:quinone oxidoreductase">
    <location>
        <begin position="1"/>
        <end position="220"/>
    </location>
</feature>
<feature type="region of interest" description="Disordered" evidence="2">
    <location>
        <begin position="200"/>
        <end position="220"/>
    </location>
</feature>
<feature type="binding site" evidence="1">
    <location>
        <position position="10"/>
    </location>
    <ligand>
        <name>FMN</name>
        <dbReference type="ChEBI" id="CHEBI:58210"/>
    </ligand>
</feature>
<feature type="binding site" evidence="1">
    <location>
        <begin position="17"/>
        <end position="19"/>
    </location>
    <ligand>
        <name>FMN</name>
        <dbReference type="ChEBI" id="CHEBI:58210"/>
    </ligand>
</feature>
<feature type="binding site" evidence="1">
    <location>
        <begin position="136"/>
        <end position="139"/>
    </location>
    <ligand>
        <name>FMN</name>
        <dbReference type="ChEBI" id="CHEBI:58210"/>
    </ligand>
</feature>
<evidence type="ECO:0000255" key="1">
    <source>
        <dbReference type="HAMAP-Rule" id="MF_01216"/>
    </source>
</evidence>
<evidence type="ECO:0000256" key="2">
    <source>
        <dbReference type="SAM" id="MobiDB-lite"/>
    </source>
</evidence>
<accession>Q9S1U6</accession>
<dbReference type="EC" id="1.6.5.-" evidence="1"/>
<dbReference type="EC" id="1.7.1.17" evidence="1"/>
<dbReference type="EMBL" id="AL939104">
    <property type="protein sequence ID" value="CAB52961.1"/>
    <property type="molecule type" value="Genomic_DNA"/>
</dbReference>
<dbReference type="PIR" id="T37110">
    <property type="entry name" value="T37110"/>
</dbReference>
<dbReference type="RefSeq" id="NP_624404.1">
    <property type="nucleotide sequence ID" value="NC_003888.3"/>
</dbReference>
<dbReference type="RefSeq" id="WP_011026806.1">
    <property type="nucleotide sequence ID" value="NZ_VNID01000033.1"/>
</dbReference>
<dbReference type="SMR" id="Q9S1U6"/>
<dbReference type="STRING" id="100226.gene:17757639"/>
<dbReference type="PaxDb" id="100226-SCO0046"/>
<dbReference type="KEGG" id="sco:SCO0046"/>
<dbReference type="PATRIC" id="fig|100226.15.peg.38"/>
<dbReference type="eggNOG" id="COG1182">
    <property type="taxonomic scope" value="Bacteria"/>
</dbReference>
<dbReference type="HOGENOM" id="CLU_088964_0_1_11"/>
<dbReference type="InParanoid" id="Q9S1U6"/>
<dbReference type="OrthoDB" id="9805013at2"/>
<dbReference type="PhylomeDB" id="Q9S1U6"/>
<dbReference type="Proteomes" id="UP000001973">
    <property type="component" value="Chromosome"/>
</dbReference>
<dbReference type="GO" id="GO:0009055">
    <property type="term" value="F:electron transfer activity"/>
    <property type="evidence" value="ECO:0007669"/>
    <property type="project" value="UniProtKB-UniRule"/>
</dbReference>
<dbReference type="GO" id="GO:0010181">
    <property type="term" value="F:FMN binding"/>
    <property type="evidence" value="ECO:0007669"/>
    <property type="project" value="UniProtKB-UniRule"/>
</dbReference>
<dbReference type="GO" id="GO:0016652">
    <property type="term" value="F:oxidoreductase activity, acting on NAD(P)H as acceptor"/>
    <property type="evidence" value="ECO:0007669"/>
    <property type="project" value="UniProtKB-UniRule"/>
</dbReference>
<dbReference type="GO" id="GO:0016655">
    <property type="term" value="F:oxidoreductase activity, acting on NAD(P)H, quinone or similar compound as acceptor"/>
    <property type="evidence" value="ECO:0007669"/>
    <property type="project" value="InterPro"/>
</dbReference>
<dbReference type="Gene3D" id="3.40.50.360">
    <property type="match status" value="1"/>
</dbReference>
<dbReference type="HAMAP" id="MF_01216">
    <property type="entry name" value="Azoreductase_type1"/>
    <property type="match status" value="1"/>
</dbReference>
<dbReference type="InterPro" id="IPR003680">
    <property type="entry name" value="Flavodoxin_fold"/>
</dbReference>
<dbReference type="InterPro" id="IPR029039">
    <property type="entry name" value="Flavoprotein-like_sf"/>
</dbReference>
<dbReference type="InterPro" id="IPR050104">
    <property type="entry name" value="FMN-dep_NADH:Q_OxRdtase_AzoR1"/>
</dbReference>
<dbReference type="InterPro" id="IPR023048">
    <property type="entry name" value="NADH:quinone_OxRdtase_FMN_depd"/>
</dbReference>
<dbReference type="PANTHER" id="PTHR43741">
    <property type="entry name" value="FMN-DEPENDENT NADH-AZOREDUCTASE 1"/>
    <property type="match status" value="1"/>
</dbReference>
<dbReference type="PANTHER" id="PTHR43741:SF4">
    <property type="entry name" value="FMN-DEPENDENT NADH:QUINONE OXIDOREDUCTASE"/>
    <property type="match status" value="1"/>
</dbReference>
<dbReference type="Pfam" id="PF02525">
    <property type="entry name" value="Flavodoxin_2"/>
    <property type="match status" value="1"/>
</dbReference>
<dbReference type="SUPFAM" id="SSF52218">
    <property type="entry name" value="Flavoproteins"/>
    <property type="match status" value="1"/>
</dbReference>
<organism>
    <name type="scientific">Streptomyces coelicolor (strain ATCC BAA-471 / A3(2) / M145)</name>
    <dbReference type="NCBI Taxonomy" id="100226"/>
    <lineage>
        <taxon>Bacteria</taxon>
        <taxon>Bacillati</taxon>
        <taxon>Actinomycetota</taxon>
        <taxon>Actinomycetes</taxon>
        <taxon>Kitasatosporales</taxon>
        <taxon>Streptomycetaceae</taxon>
        <taxon>Streptomyces</taxon>
        <taxon>Streptomyces albidoflavus group</taxon>
    </lineage>
</organism>
<comment type="function">
    <text evidence="1">Quinone reductase that provides resistance to thiol-specific stress caused by electrophilic quinones.</text>
</comment>
<comment type="function">
    <text evidence="1">Also exhibits azoreductase activity. Catalyzes the reductive cleavage of the azo bond in aromatic azo compounds to the corresponding amines.</text>
</comment>
<comment type="catalytic activity">
    <reaction evidence="1">
        <text>2 a quinone + NADH + H(+) = 2 a 1,4-benzosemiquinone + NAD(+)</text>
        <dbReference type="Rhea" id="RHEA:65952"/>
        <dbReference type="ChEBI" id="CHEBI:15378"/>
        <dbReference type="ChEBI" id="CHEBI:57540"/>
        <dbReference type="ChEBI" id="CHEBI:57945"/>
        <dbReference type="ChEBI" id="CHEBI:132124"/>
        <dbReference type="ChEBI" id="CHEBI:134225"/>
    </reaction>
</comment>
<comment type="catalytic activity">
    <reaction evidence="1">
        <text>N,N-dimethyl-1,4-phenylenediamine + anthranilate + 2 NAD(+) = 2-(4-dimethylaminophenyl)diazenylbenzoate + 2 NADH + 2 H(+)</text>
        <dbReference type="Rhea" id="RHEA:55872"/>
        <dbReference type="ChEBI" id="CHEBI:15378"/>
        <dbReference type="ChEBI" id="CHEBI:15783"/>
        <dbReference type="ChEBI" id="CHEBI:16567"/>
        <dbReference type="ChEBI" id="CHEBI:57540"/>
        <dbReference type="ChEBI" id="CHEBI:57945"/>
        <dbReference type="ChEBI" id="CHEBI:71579"/>
        <dbReference type="EC" id="1.7.1.17"/>
    </reaction>
</comment>
<comment type="cofactor">
    <cofactor evidence="1">
        <name>FMN</name>
        <dbReference type="ChEBI" id="CHEBI:58210"/>
    </cofactor>
    <text evidence="1">Binds 1 FMN per subunit.</text>
</comment>
<comment type="subunit">
    <text evidence="1">Homodimer.</text>
</comment>
<comment type="similarity">
    <text evidence="1">Belongs to the azoreductase type 1 family.</text>
</comment>
<name>AZOR_STRCO</name>
<gene>
    <name evidence="1" type="primary">azoR</name>
    <name type="ordered locus">SCO0046</name>
    <name type="ORF">SCJ4.27</name>
</gene>